<evidence type="ECO:0000255" key="1"/>
<evidence type="ECO:0000269" key="2">
    <source>
    </source>
</evidence>
<evidence type="ECO:0000303" key="3">
    <source>
    </source>
</evidence>
<evidence type="ECO:0000305" key="4"/>
<evidence type="ECO:0000305" key="5">
    <source>
    </source>
</evidence>
<evidence type="ECO:0000312" key="6">
    <source>
        <dbReference type="EMBL" id="ACA09640.1"/>
    </source>
</evidence>
<keyword id="KW-0027">Amidation</keyword>
<keyword id="KW-0878">Amphibian defense peptide</keyword>
<keyword id="KW-0044">Antibiotic</keyword>
<keyword id="KW-0929">Antimicrobial</keyword>
<keyword id="KW-0165">Cleavage on pair of basic residues</keyword>
<keyword id="KW-0903">Direct protein sequencing</keyword>
<keyword id="KW-0295">Fungicide</keyword>
<keyword id="KW-0391">Immunity</keyword>
<keyword id="KW-0399">Innate immunity</keyword>
<keyword id="KW-0964">Secreted</keyword>
<keyword id="KW-0732">Signal</keyword>
<name>TPE_AMOLO</name>
<feature type="signal peptide" evidence="1">
    <location>
        <begin position="1"/>
        <end position="22"/>
    </location>
</feature>
<feature type="propeptide" id="PRO_0000450004" evidence="5">
    <location>
        <begin position="23"/>
        <end position="47"/>
    </location>
</feature>
<feature type="peptide" id="PRO_5002952493" description="Temporin-ALe" evidence="2">
    <location>
        <begin position="47"/>
        <end position="62"/>
    </location>
</feature>
<feature type="modified residue" description="Leucine amide" evidence="2">
    <location>
        <position position="62"/>
    </location>
</feature>
<proteinExistence type="evidence at protein level"/>
<accession>C5H0D7</accession>
<sequence length="64" mass="7401">MFTLKKSLLLLFFLGTINLSLCEQERNAEEERRDEPDERNAEVEKRFFPIVGKLLFGLSGLLGK</sequence>
<dbReference type="EMBL" id="EU311550">
    <property type="protein sequence ID" value="ACA09640.1"/>
    <property type="molecule type" value="mRNA"/>
</dbReference>
<dbReference type="GO" id="GO:0005576">
    <property type="term" value="C:extracellular region"/>
    <property type="evidence" value="ECO:0007669"/>
    <property type="project" value="UniProtKB-SubCell"/>
</dbReference>
<dbReference type="GO" id="GO:0042742">
    <property type="term" value="P:defense response to bacterium"/>
    <property type="evidence" value="ECO:0007669"/>
    <property type="project" value="UniProtKB-KW"/>
</dbReference>
<dbReference type="GO" id="GO:0050832">
    <property type="term" value="P:defense response to fungus"/>
    <property type="evidence" value="ECO:0007669"/>
    <property type="project" value="UniProtKB-KW"/>
</dbReference>
<dbReference type="GO" id="GO:0045087">
    <property type="term" value="P:innate immune response"/>
    <property type="evidence" value="ECO:0007669"/>
    <property type="project" value="UniProtKB-KW"/>
</dbReference>
<dbReference type="GO" id="GO:0031640">
    <property type="term" value="P:killing of cells of another organism"/>
    <property type="evidence" value="ECO:0007669"/>
    <property type="project" value="UniProtKB-KW"/>
</dbReference>
<dbReference type="InterPro" id="IPR004275">
    <property type="entry name" value="Frog_antimicrobial_propeptide"/>
</dbReference>
<dbReference type="Pfam" id="PF03032">
    <property type="entry name" value="FSAP_sig_propep"/>
    <property type="match status" value="1"/>
</dbReference>
<organism>
    <name type="scientific">Amolops loloensis</name>
    <name type="common">Lolokou Sucker Frog</name>
    <name type="synonym">Staurois loloensis</name>
    <dbReference type="NCBI Taxonomy" id="318551"/>
    <lineage>
        <taxon>Eukaryota</taxon>
        <taxon>Metazoa</taxon>
        <taxon>Chordata</taxon>
        <taxon>Craniata</taxon>
        <taxon>Vertebrata</taxon>
        <taxon>Euteleostomi</taxon>
        <taxon>Amphibia</taxon>
        <taxon>Batrachia</taxon>
        <taxon>Anura</taxon>
        <taxon>Neobatrachia</taxon>
        <taxon>Ranoidea</taxon>
        <taxon>Ranidae</taxon>
        <taxon>Amolops</taxon>
    </lineage>
</organism>
<comment type="function">
    <text evidence="2">Antimicrobial peptide with activity against Gram-positive and Gram-negative bacteria and against fungi (PubMed:19843479). Has been tested against S.aureus (MIC=1.25 ug/mL), B.pumilus (MIC=5.0 ug/mL), B.cereus (MIC=15.0 ug/mL), E.coli (MIC=1.25 ug/mL), B.dysenteriae (MIC=5.0 ug/mL), A.cacoaceticus (MIC=15.0 ug/mL), P.aeruginosa (MIC=5.0 ug/mL) and C.albicans (MIC=1.25 ug/mL) (PubMed:19843479). Also shows a weak hemolytic activity (PubMed:19843479).</text>
</comment>
<comment type="subcellular location">
    <subcellularLocation>
        <location evidence="2">Secreted</location>
    </subcellularLocation>
</comment>
<comment type="tissue specificity">
    <text evidence="5">Expressed by the skin glands.</text>
</comment>
<comment type="mass spectrometry" mass="1719.25" method="MALDI" evidence="2"/>
<comment type="similarity">
    <text evidence="4">Belongs to the frog skin active peptide (FSAP) family. Temporin subfamily.</text>
</comment>
<comment type="online information" name="The antimicrobial peptide database">
    <link uri="https://wangapd3.com/database/query_output.php?ID=01932"/>
</comment>
<reference key="1">
    <citation type="journal article" date="2010" name="Comp. Biochem. Physiol.">
        <title>Five novel antimicrobial peptides from skin secretions of the frog, Amolops loloensis.</title>
        <authorList>
            <person name="Wang M."/>
            <person name="Wang Y."/>
            <person name="Wang A."/>
            <person name="Song Y."/>
            <person name="Ma D."/>
            <person name="Yang H."/>
            <person name="Ma Y."/>
            <person name="Lai R."/>
        </authorList>
    </citation>
    <scope>NUCLEOTIDE SEQUENCE [MRNA]</scope>
    <scope>PROTEIN SEQUENCE OF 47-62</scope>
    <scope>FUNCTION</scope>
    <scope>MASS SPECTROMETRY</scope>
    <scope>AMIDATION AT LEU-62</scope>
    <scope>SUBCELLULAR LOCATION</scope>
    <source>
        <tissue>Skin</tissue>
        <tissue>Skin secretion</tissue>
    </source>
</reference>
<protein>
    <recommendedName>
        <fullName evidence="3">Temporin-ALe</fullName>
    </recommendedName>
    <alternativeName>
        <fullName evidence="6">Amolopin-2f</fullName>
    </alternativeName>
</protein>